<keyword id="KW-0067">ATP-binding</keyword>
<keyword id="KW-0436">Ligase</keyword>
<keyword id="KW-0547">Nucleotide-binding</keyword>
<keyword id="KW-0648">Protein biosynthesis</keyword>
<keyword id="KW-1185">Reference proteome</keyword>
<gene>
    <name evidence="1" type="primary">gatC</name>
    <name type="ordered locus">sync_0337</name>
</gene>
<protein>
    <recommendedName>
        <fullName evidence="1">Aspartyl/glutamyl-tRNA(Asn/Gln) amidotransferase subunit C</fullName>
        <shortName evidence="1">Asp/Glu-ADT subunit C</shortName>
        <ecNumber evidence="1">6.3.5.-</ecNumber>
    </recommendedName>
</protein>
<organism>
    <name type="scientific">Synechococcus sp. (strain CC9311)</name>
    <dbReference type="NCBI Taxonomy" id="64471"/>
    <lineage>
        <taxon>Bacteria</taxon>
        <taxon>Bacillati</taxon>
        <taxon>Cyanobacteriota</taxon>
        <taxon>Cyanophyceae</taxon>
        <taxon>Synechococcales</taxon>
        <taxon>Synechococcaceae</taxon>
        <taxon>Synechococcus</taxon>
    </lineage>
</organism>
<dbReference type="EC" id="6.3.5.-" evidence="1"/>
<dbReference type="EMBL" id="CP000435">
    <property type="protein sequence ID" value="ABI46216.1"/>
    <property type="molecule type" value="Genomic_DNA"/>
</dbReference>
<dbReference type="RefSeq" id="WP_011618312.1">
    <property type="nucleotide sequence ID" value="NC_008319.1"/>
</dbReference>
<dbReference type="SMR" id="Q0IDA2"/>
<dbReference type="STRING" id="64471.sync_0337"/>
<dbReference type="KEGG" id="syg:sync_0337"/>
<dbReference type="eggNOG" id="COG0721">
    <property type="taxonomic scope" value="Bacteria"/>
</dbReference>
<dbReference type="HOGENOM" id="CLU_105899_1_2_3"/>
<dbReference type="OrthoDB" id="9813938at2"/>
<dbReference type="Proteomes" id="UP000001961">
    <property type="component" value="Chromosome"/>
</dbReference>
<dbReference type="GO" id="GO:0050566">
    <property type="term" value="F:asparaginyl-tRNA synthase (glutamine-hydrolyzing) activity"/>
    <property type="evidence" value="ECO:0007669"/>
    <property type="project" value="RHEA"/>
</dbReference>
<dbReference type="GO" id="GO:0005524">
    <property type="term" value="F:ATP binding"/>
    <property type="evidence" value="ECO:0007669"/>
    <property type="project" value="UniProtKB-KW"/>
</dbReference>
<dbReference type="GO" id="GO:0050567">
    <property type="term" value="F:glutaminyl-tRNA synthase (glutamine-hydrolyzing) activity"/>
    <property type="evidence" value="ECO:0007669"/>
    <property type="project" value="UniProtKB-UniRule"/>
</dbReference>
<dbReference type="GO" id="GO:0070681">
    <property type="term" value="P:glutaminyl-tRNAGln biosynthesis via transamidation"/>
    <property type="evidence" value="ECO:0007669"/>
    <property type="project" value="TreeGrafter"/>
</dbReference>
<dbReference type="GO" id="GO:0006450">
    <property type="term" value="P:regulation of translational fidelity"/>
    <property type="evidence" value="ECO:0007669"/>
    <property type="project" value="InterPro"/>
</dbReference>
<dbReference type="GO" id="GO:0006412">
    <property type="term" value="P:translation"/>
    <property type="evidence" value="ECO:0007669"/>
    <property type="project" value="UniProtKB-UniRule"/>
</dbReference>
<dbReference type="Gene3D" id="1.10.20.60">
    <property type="entry name" value="Glu-tRNAGln amidotransferase C subunit, N-terminal domain"/>
    <property type="match status" value="1"/>
</dbReference>
<dbReference type="HAMAP" id="MF_00122">
    <property type="entry name" value="GatC"/>
    <property type="match status" value="1"/>
</dbReference>
<dbReference type="InterPro" id="IPR036113">
    <property type="entry name" value="Asp/Glu-ADT_sf_sub_c"/>
</dbReference>
<dbReference type="InterPro" id="IPR003837">
    <property type="entry name" value="GatC"/>
</dbReference>
<dbReference type="NCBIfam" id="TIGR00135">
    <property type="entry name" value="gatC"/>
    <property type="match status" value="1"/>
</dbReference>
<dbReference type="PANTHER" id="PTHR15004">
    <property type="entry name" value="GLUTAMYL-TRNA(GLN) AMIDOTRANSFERASE SUBUNIT C, MITOCHONDRIAL"/>
    <property type="match status" value="1"/>
</dbReference>
<dbReference type="PANTHER" id="PTHR15004:SF0">
    <property type="entry name" value="GLUTAMYL-TRNA(GLN) AMIDOTRANSFERASE SUBUNIT C, MITOCHONDRIAL"/>
    <property type="match status" value="1"/>
</dbReference>
<dbReference type="Pfam" id="PF02686">
    <property type="entry name" value="GatC"/>
    <property type="match status" value="1"/>
</dbReference>
<dbReference type="SUPFAM" id="SSF141000">
    <property type="entry name" value="Glu-tRNAGln amidotransferase C subunit"/>
    <property type="match status" value="1"/>
</dbReference>
<evidence type="ECO:0000255" key="1">
    <source>
        <dbReference type="HAMAP-Rule" id="MF_00122"/>
    </source>
</evidence>
<proteinExistence type="inferred from homology"/>
<accession>Q0IDA2</accession>
<reference key="1">
    <citation type="journal article" date="2006" name="Proc. Natl. Acad. Sci. U.S.A.">
        <title>Genome sequence of Synechococcus CC9311: insights into adaptation to a coastal environment.</title>
        <authorList>
            <person name="Palenik B."/>
            <person name="Ren Q."/>
            <person name="Dupont C.L."/>
            <person name="Myers G.S."/>
            <person name="Heidelberg J.F."/>
            <person name="Badger J.H."/>
            <person name="Madupu R."/>
            <person name="Nelson W.C."/>
            <person name="Brinkac L.M."/>
            <person name="Dodson R.J."/>
            <person name="Durkin A.S."/>
            <person name="Daugherty S.C."/>
            <person name="Sullivan S.A."/>
            <person name="Khouri H."/>
            <person name="Mohamoud Y."/>
            <person name="Halpin R."/>
            <person name="Paulsen I.T."/>
        </authorList>
    </citation>
    <scope>NUCLEOTIDE SEQUENCE [LARGE SCALE GENOMIC DNA]</scope>
    <source>
        <strain>CC9311</strain>
    </source>
</reference>
<feature type="chain" id="PRO_1000016233" description="Aspartyl/glutamyl-tRNA(Asn/Gln) amidotransferase subunit C">
    <location>
        <begin position="1"/>
        <end position="97"/>
    </location>
</feature>
<sequence>MSKITADDVRKVAKLARLDLPEDTIATYTGQLERILDYVDQLQAVDTEGVPPTTRAVEVVNATREDSVVATDVRQELLDQAPQREGDFFRVPKILAD</sequence>
<name>GATC_SYNS3</name>
<comment type="function">
    <text evidence="1">Allows the formation of correctly charged Asn-tRNA(Asn) or Gln-tRNA(Gln) through the transamidation of misacylated Asp-tRNA(Asn) or Glu-tRNA(Gln) in organisms which lack either or both of asparaginyl-tRNA or glutaminyl-tRNA synthetases. The reaction takes place in the presence of glutamine and ATP through an activated phospho-Asp-tRNA(Asn) or phospho-Glu-tRNA(Gln).</text>
</comment>
<comment type="catalytic activity">
    <reaction evidence="1">
        <text>L-glutamyl-tRNA(Gln) + L-glutamine + ATP + H2O = L-glutaminyl-tRNA(Gln) + L-glutamate + ADP + phosphate + H(+)</text>
        <dbReference type="Rhea" id="RHEA:17521"/>
        <dbReference type="Rhea" id="RHEA-COMP:9681"/>
        <dbReference type="Rhea" id="RHEA-COMP:9684"/>
        <dbReference type="ChEBI" id="CHEBI:15377"/>
        <dbReference type="ChEBI" id="CHEBI:15378"/>
        <dbReference type="ChEBI" id="CHEBI:29985"/>
        <dbReference type="ChEBI" id="CHEBI:30616"/>
        <dbReference type="ChEBI" id="CHEBI:43474"/>
        <dbReference type="ChEBI" id="CHEBI:58359"/>
        <dbReference type="ChEBI" id="CHEBI:78520"/>
        <dbReference type="ChEBI" id="CHEBI:78521"/>
        <dbReference type="ChEBI" id="CHEBI:456216"/>
    </reaction>
</comment>
<comment type="catalytic activity">
    <reaction evidence="1">
        <text>L-aspartyl-tRNA(Asn) + L-glutamine + ATP + H2O = L-asparaginyl-tRNA(Asn) + L-glutamate + ADP + phosphate + 2 H(+)</text>
        <dbReference type="Rhea" id="RHEA:14513"/>
        <dbReference type="Rhea" id="RHEA-COMP:9674"/>
        <dbReference type="Rhea" id="RHEA-COMP:9677"/>
        <dbReference type="ChEBI" id="CHEBI:15377"/>
        <dbReference type="ChEBI" id="CHEBI:15378"/>
        <dbReference type="ChEBI" id="CHEBI:29985"/>
        <dbReference type="ChEBI" id="CHEBI:30616"/>
        <dbReference type="ChEBI" id="CHEBI:43474"/>
        <dbReference type="ChEBI" id="CHEBI:58359"/>
        <dbReference type="ChEBI" id="CHEBI:78515"/>
        <dbReference type="ChEBI" id="CHEBI:78516"/>
        <dbReference type="ChEBI" id="CHEBI:456216"/>
    </reaction>
</comment>
<comment type="subunit">
    <text evidence="1">Heterotrimer of A, B and C subunits.</text>
</comment>
<comment type="similarity">
    <text evidence="1">Belongs to the GatC family.</text>
</comment>